<gene>
    <name evidence="1" type="primary">atpA</name>
    <name type="ordered locus">TGAM_0146</name>
</gene>
<proteinExistence type="inferred from homology"/>
<evidence type="ECO:0000255" key="1">
    <source>
        <dbReference type="HAMAP-Rule" id="MF_00309"/>
    </source>
</evidence>
<reference key="1">
    <citation type="journal article" date="2007" name="Genome Biol.">
        <title>Genome analysis and genome-wide proteomics of Thermococcus gammatolerans, the most radioresistant organism known amongst the Archaea.</title>
        <authorList>
            <person name="Zivanovic Y."/>
            <person name="Armengaud J."/>
            <person name="Lagorce A."/>
            <person name="Leplat C."/>
            <person name="Guerin P."/>
            <person name="Dutertre M."/>
            <person name="Anthouard V."/>
            <person name="Forterre P."/>
            <person name="Wincker P."/>
            <person name="Confalonieri F."/>
        </authorList>
    </citation>
    <scope>NUCLEOTIDE SEQUENCE [LARGE SCALE GENOMIC DNA]</scope>
    <source>
        <strain>DSM 15229 / JCM 11827 / EJ3</strain>
    </source>
</reference>
<name>AATA_THEGJ</name>
<dbReference type="EC" id="7.1.2.2" evidence="1"/>
<dbReference type="EMBL" id="CP001398">
    <property type="protein sequence ID" value="ACS32648.1"/>
    <property type="molecule type" value="Genomic_DNA"/>
</dbReference>
<dbReference type="RefSeq" id="WP_015857768.1">
    <property type="nucleotide sequence ID" value="NC_012804.1"/>
</dbReference>
<dbReference type="SMR" id="C5A336"/>
<dbReference type="STRING" id="593117.TGAM_0146"/>
<dbReference type="PaxDb" id="593117-TGAM_0146"/>
<dbReference type="GeneID" id="7988726"/>
<dbReference type="KEGG" id="tga:TGAM_0146"/>
<dbReference type="PATRIC" id="fig|593117.10.peg.149"/>
<dbReference type="eggNOG" id="arCOG00868">
    <property type="taxonomic scope" value="Archaea"/>
</dbReference>
<dbReference type="HOGENOM" id="CLU_008162_3_1_2"/>
<dbReference type="OrthoDB" id="115235at2157"/>
<dbReference type="Proteomes" id="UP000001488">
    <property type="component" value="Chromosome"/>
</dbReference>
<dbReference type="GO" id="GO:0005886">
    <property type="term" value="C:plasma membrane"/>
    <property type="evidence" value="ECO:0007669"/>
    <property type="project" value="UniProtKB-SubCell"/>
</dbReference>
<dbReference type="GO" id="GO:0033178">
    <property type="term" value="C:proton-transporting two-sector ATPase complex, catalytic domain"/>
    <property type="evidence" value="ECO:0007669"/>
    <property type="project" value="InterPro"/>
</dbReference>
<dbReference type="GO" id="GO:0005524">
    <property type="term" value="F:ATP binding"/>
    <property type="evidence" value="ECO:0007669"/>
    <property type="project" value="UniProtKB-UniRule"/>
</dbReference>
<dbReference type="GO" id="GO:0016887">
    <property type="term" value="F:ATP hydrolysis activity"/>
    <property type="evidence" value="ECO:0007669"/>
    <property type="project" value="InterPro"/>
</dbReference>
<dbReference type="GO" id="GO:0046933">
    <property type="term" value="F:proton-transporting ATP synthase activity, rotational mechanism"/>
    <property type="evidence" value="ECO:0007669"/>
    <property type="project" value="UniProtKB-UniRule"/>
</dbReference>
<dbReference type="GO" id="GO:0046961">
    <property type="term" value="F:proton-transporting ATPase activity, rotational mechanism"/>
    <property type="evidence" value="ECO:0007669"/>
    <property type="project" value="InterPro"/>
</dbReference>
<dbReference type="GO" id="GO:0042777">
    <property type="term" value="P:proton motive force-driven plasma membrane ATP synthesis"/>
    <property type="evidence" value="ECO:0007669"/>
    <property type="project" value="UniProtKB-UniRule"/>
</dbReference>
<dbReference type="CDD" id="cd18111">
    <property type="entry name" value="ATP-synt_V_A-type_alpha_C"/>
    <property type="match status" value="1"/>
</dbReference>
<dbReference type="CDD" id="cd18119">
    <property type="entry name" value="ATP-synt_V_A-type_alpha_N"/>
    <property type="match status" value="1"/>
</dbReference>
<dbReference type="CDD" id="cd01134">
    <property type="entry name" value="V_A-ATPase_A"/>
    <property type="match status" value="1"/>
</dbReference>
<dbReference type="FunFam" id="3.40.50.300:FF:000675">
    <property type="entry name" value="V-type ATP synthase alpha chain"/>
    <property type="match status" value="1"/>
</dbReference>
<dbReference type="FunFam" id="1.10.1140.10:FF:000002">
    <property type="entry name" value="V-type proton ATPase catalytic subunit A"/>
    <property type="match status" value="1"/>
</dbReference>
<dbReference type="FunFam" id="2.40.30.20:FF:000002">
    <property type="entry name" value="V-type proton ATPase catalytic subunit A"/>
    <property type="match status" value="1"/>
</dbReference>
<dbReference type="FunFam" id="2.40.50.100:FF:000008">
    <property type="entry name" value="V-type proton ATPase catalytic subunit A"/>
    <property type="match status" value="1"/>
</dbReference>
<dbReference type="Gene3D" id="2.40.30.20">
    <property type="match status" value="1"/>
</dbReference>
<dbReference type="Gene3D" id="2.40.50.100">
    <property type="match status" value="1"/>
</dbReference>
<dbReference type="Gene3D" id="1.10.1140.10">
    <property type="entry name" value="Bovine Mitochondrial F1-atpase, Atp Synthase Beta Chain, Chain D, domain 3"/>
    <property type="match status" value="1"/>
</dbReference>
<dbReference type="Gene3D" id="3.40.50.300">
    <property type="entry name" value="P-loop containing nucleotide triphosphate hydrolases"/>
    <property type="match status" value="1"/>
</dbReference>
<dbReference type="HAMAP" id="MF_00309">
    <property type="entry name" value="ATP_synth_A_arch"/>
    <property type="match status" value="1"/>
</dbReference>
<dbReference type="InterPro" id="IPR003593">
    <property type="entry name" value="AAA+_ATPase"/>
</dbReference>
<dbReference type="InterPro" id="IPR055190">
    <property type="entry name" value="ATP-synt_VA_C"/>
</dbReference>
<dbReference type="InterPro" id="IPR031686">
    <property type="entry name" value="ATP-synth_a_Xtn"/>
</dbReference>
<dbReference type="InterPro" id="IPR023366">
    <property type="entry name" value="ATP_synth_asu-like_sf"/>
</dbReference>
<dbReference type="InterPro" id="IPR005726">
    <property type="entry name" value="ATP_synth_asu_arc"/>
</dbReference>
<dbReference type="InterPro" id="IPR020003">
    <property type="entry name" value="ATPase_a/bsu_AS"/>
</dbReference>
<dbReference type="InterPro" id="IPR004100">
    <property type="entry name" value="ATPase_F1/V1/A1_a/bsu_N"/>
</dbReference>
<dbReference type="InterPro" id="IPR036121">
    <property type="entry name" value="ATPase_F1/V1/A1_a/bsu_N_sf"/>
</dbReference>
<dbReference type="InterPro" id="IPR000194">
    <property type="entry name" value="ATPase_F1/V1/A1_a/bsu_nucl-bd"/>
</dbReference>
<dbReference type="InterPro" id="IPR024034">
    <property type="entry name" value="ATPase_F1/V1_b/a_C"/>
</dbReference>
<dbReference type="InterPro" id="IPR027417">
    <property type="entry name" value="P-loop_NTPase"/>
</dbReference>
<dbReference type="InterPro" id="IPR022878">
    <property type="entry name" value="V-ATPase_asu"/>
</dbReference>
<dbReference type="NCBIfam" id="TIGR01043">
    <property type="entry name" value="ATP_syn_A_arch"/>
    <property type="match status" value="1"/>
</dbReference>
<dbReference type="NCBIfam" id="NF003220">
    <property type="entry name" value="PRK04192.1"/>
    <property type="match status" value="1"/>
</dbReference>
<dbReference type="PANTHER" id="PTHR43607:SF1">
    <property type="entry name" value="H(+)-TRANSPORTING TWO-SECTOR ATPASE"/>
    <property type="match status" value="1"/>
</dbReference>
<dbReference type="PANTHER" id="PTHR43607">
    <property type="entry name" value="V-TYPE PROTON ATPASE CATALYTIC SUBUNIT A"/>
    <property type="match status" value="1"/>
</dbReference>
<dbReference type="Pfam" id="PF00006">
    <property type="entry name" value="ATP-synt_ab"/>
    <property type="match status" value="1"/>
</dbReference>
<dbReference type="Pfam" id="PF02874">
    <property type="entry name" value="ATP-synt_ab_N"/>
    <property type="match status" value="1"/>
</dbReference>
<dbReference type="Pfam" id="PF16886">
    <property type="entry name" value="ATP-synt_ab_Xtn"/>
    <property type="match status" value="1"/>
</dbReference>
<dbReference type="Pfam" id="PF22919">
    <property type="entry name" value="ATP-synt_VA_C"/>
    <property type="match status" value="1"/>
</dbReference>
<dbReference type="SMART" id="SM00382">
    <property type="entry name" value="AAA"/>
    <property type="match status" value="1"/>
</dbReference>
<dbReference type="SUPFAM" id="SSF47917">
    <property type="entry name" value="C-terminal domain of alpha and beta subunits of F1 ATP synthase"/>
    <property type="match status" value="1"/>
</dbReference>
<dbReference type="SUPFAM" id="SSF50615">
    <property type="entry name" value="N-terminal domain of alpha and beta subunits of F1 ATP synthase"/>
    <property type="match status" value="1"/>
</dbReference>
<dbReference type="SUPFAM" id="SSF52540">
    <property type="entry name" value="P-loop containing nucleoside triphosphate hydrolases"/>
    <property type="match status" value="1"/>
</dbReference>
<dbReference type="PROSITE" id="PS00152">
    <property type="entry name" value="ATPASE_ALPHA_BETA"/>
    <property type="match status" value="1"/>
</dbReference>
<sequence>MGRIVRVTGPLVVADGMKGAKMYEVVRVGEMGLIGEIIRLEGDRAVIQVYEETAGIKPGEPVIGTGSSLSVELGPGLLTSMYDGIQRPLEKLRELSGDFIARGLTAPALPRDKKWHFTPTVKVGDRVTGGDILGVVPETSIIEHKILVPPWVEGEIVEIAEEGDYTVEEVIAKVKKPDGTIEELKMYHRWPVRVKRPYKNKLPPEVPLITGQRTIDTFFSIAKGGTAAIPGPFGSGKTVTQHQLAKWSDAQVVVYIGCGERGNEMTDVLEEFPKLKDPKTGKPLMERTVLIANTSNMPVAAREASIYTGITIAEYFRDQGYDVALMADSTSRWAEALREISGRLEEMPGEEGYPAYLASKIAEFYERAGRVVTLGSEPRVGSVSVIGAVSPPGGDFSEPVVQNTLRVVKVFWALDADLARRRHFPAINWLRSYSLYLDAVQDWWHKNVDPEWRKMRDTAMALLQKEAELQEIVRIVGPDALPDREKAILIVTRMLREDYLQQDAFDEVDTYCPPKKQVTMMRVILNFYNRTMEAVDRGVPVDEIARLPVREKIGRMKFEPDVEKIRALIDETNAQFEELFKKYGV</sequence>
<keyword id="KW-0066">ATP synthesis</keyword>
<keyword id="KW-0067">ATP-binding</keyword>
<keyword id="KW-1003">Cell membrane</keyword>
<keyword id="KW-0375">Hydrogen ion transport</keyword>
<keyword id="KW-0406">Ion transport</keyword>
<keyword id="KW-0472">Membrane</keyword>
<keyword id="KW-0547">Nucleotide-binding</keyword>
<keyword id="KW-1185">Reference proteome</keyword>
<keyword id="KW-1278">Translocase</keyword>
<keyword id="KW-0813">Transport</keyword>
<feature type="chain" id="PRO_1000205038" description="A-type ATP synthase subunit A">
    <location>
        <begin position="1"/>
        <end position="585"/>
    </location>
</feature>
<feature type="binding site" evidence="1">
    <location>
        <begin position="231"/>
        <end position="238"/>
    </location>
    <ligand>
        <name>ATP</name>
        <dbReference type="ChEBI" id="CHEBI:30616"/>
    </ligand>
</feature>
<protein>
    <recommendedName>
        <fullName evidence="1">A-type ATP synthase subunit A</fullName>
        <ecNumber evidence="1">7.1.2.2</ecNumber>
    </recommendedName>
</protein>
<accession>C5A336</accession>
<comment type="function">
    <text evidence="1">Component of the A-type ATP synthase that produces ATP from ADP in the presence of a proton gradient across the membrane. The A chain is the catalytic subunit.</text>
</comment>
<comment type="catalytic activity">
    <reaction evidence="1">
        <text>ATP + H2O + 4 H(+)(in) = ADP + phosphate + 5 H(+)(out)</text>
        <dbReference type="Rhea" id="RHEA:57720"/>
        <dbReference type="ChEBI" id="CHEBI:15377"/>
        <dbReference type="ChEBI" id="CHEBI:15378"/>
        <dbReference type="ChEBI" id="CHEBI:30616"/>
        <dbReference type="ChEBI" id="CHEBI:43474"/>
        <dbReference type="ChEBI" id="CHEBI:456216"/>
        <dbReference type="EC" id="7.1.2.2"/>
    </reaction>
</comment>
<comment type="subunit">
    <text evidence="1">Has multiple subunits with at least A(3), B(3), C, D, E, F, H, I and proteolipid K(x).</text>
</comment>
<comment type="subcellular location">
    <subcellularLocation>
        <location evidence="1">Cell membrane</location>
        <topology evidence="1">Peripheral membrane protein</topology>
    </subcellularLocation>
</comment>
<comment type="similarity">
    <text evidence="1">Belongs to the ATPase alpha/beta chains family.</text>
</comment>
<organism>
    <name type="scientific">Thermococcus gammatolerans (strain DSM 15229 / JCM 11827 / EJ3)</name>
    <dbReference type="NCBI Taxonomy" id="593117"/>
    <lineage>
        <taxon>Archaea</taxon>
        <taxon>Methanobacteriati</taxon>
        <taxon>Methanobacteriota</taxon>
        <taxon>Thermococci</taxon>
        <taxon>Thermococcales</taxon>
        <taxon>Thermococcaceae</taxon>
        <taxon>Thermococcus</taxon>
    </lineage>
</organism>